<comment type="function">
    <text evidence="1">RNA chaperone that binds small regulatory RNA (sRNAs) and mRNAs to facilitate mRNA translational regulation in response to envelope stress, environmental stress and changes in metabolite concentrations. Also binds with high specificity to tRNAs.</text>
</comment>
<comment type="subunit">
    <text evidence="1">Homohexamer.</text>
</comment>
<comment type="similarity">
    <text evidence="1">Belongs to the Hfq family.</text>
</comment>
<evidence type="ECO:0000255" key="1">
    <source>
        <dbReference type="HAMAP-Rule" id="MF_00436"/>
    </source>
</evidence>
<evidence type="ECO:0000255" key="2">
    <source>
        <dbReference type="PROSITE-ProRule" id="PRU01346"/>
    </source>
</evidence>
<evidence type="ECO:0000256" key="3">
    <source>
        <dbReference type="SAM" id="MobiDB-lite"/>
    </source>
</evidence>
<accession>B7MSJ0</accession>
<keyword id="KW-0694">RNA-binding</keyword>
<keyword id="KW-0346">Stress response</keyword>
<protein>
    <recommendedName>
        <fullName evidence="1">RNA-binding protein Hfq</fullName>
    </recommendedName>
</protein>
<reference key="1">
    <citation type="journal article" date="2009" name="PLoS Genet.">
        <title>Organised genome dynamics in the Escherichia coli species results in highly diverse adaptive paths.</title>
        <authorList>
            <person name="Touchon M."/>
            <person name="Hoede C."/>
            <person name="Tenaillon O."/>
            <person name="Barbe V."/>
            <person name="Baeriswyl S."/>
            <person name="Bidet P."/>
            <person name="Bingen E."/>
            <person name="Bonacorsi S."/>
            <person name="Bouchier C."/>
            <person name="Bouvet O."/>
            <person name="Calteau A."/>
            <person name="Chiapello H."/>
            <person name="Clermont O."/>
            <person name="Cruveiller S."/>
            <person name="Danchin A."/>
            <person name="Diard M."/>
            <person name="Dossat C."/>
            <person name="Karoui M.E."/>
            <person name="Frapy E."/>
            <person name="Garry L."/>
            <person name="Ghigo J.M."/>
            <person name="Gilles A.M."/>
            <person name="Johnson J."/>
            <person name="Le Bouguenec C."/>
            <person name="Lescat M."/>
            <person name="Mangenot S."/>
            <person name="Martinez-Jehanne V."/>
            <person name="Matic I."/>
            <person name="Nassif X."/>
            <person name="Oztas S."/>
            <person name="Petit M.A."/>
            <person name="Pichon C."/>
            <person name="Rouy Z."/>
            <person name="Ruf C.S."/>
            <person name="Schneider D."/>
            <person name="Tourret J."/>
            <person name="Vacherie B."/>
            <person name="Vallenet D."/>
            <person name="Medigue C."/>
            <person name="Rocha E.P.C."/>
            <person name="Denamur E."/>
        </authorList>
    </citation>
    <scope>NUCLEOTIDE SEQUENCE [LARGE SCALE GENOMIC DNA]</scope>
    <source>
        <strain>ED1a</strain>
    </source>
</reference>
<sequence length="102" mass="11166">MAKGQSLQDPFLNALRRERVPVSIYLVNGIKLQGQIESFDQFVILLKNTVSQMVYKHAISTVVPSRPVSHHSNNAGGGTSSNYHHGSSAQNTSAQQDSEETE</sequence>
<organism>
    <name type="scientific">Escherichia coli O81 (strain ED1a)</name>
    <dbReference type="NCBI Taxonomy" id="585397"/>
    <lineage>
        <taxon>Bacteria</taxon>
        <taxon>Pseudomonadati</taxon>
        <taxon>Pseudomonadota</taxon>
        <taxon>Gammaproteobacteria</taxon>
        <taxon>Enterobacterales</taxon>
        <taxon>Enterobacteriaceae</taxon>
        <taxon>Escherichia</taxon>
    </lineage>
</organism>
<feature type="chain" id="PRO_1000135033" description="RNA-binding protein Hfq">
    <location>
        <begin position="1"/>
        <end position="102"/>
    </location>
</feature>
<feature type="domain" description="Sm" evidence="2">
    <location>
        <begin position="9"/>
        <end position="68"/>
    </location>
</feature>
<feature type="region of interest" description="Disordered" evidence="3">
    <location>
        <begin position="63"/>
        <end position="102"/>
    </location>
</feature>
<feature type="compositionally biased region" description="Polar residues" evidence="3">
    <location>
        <begin position="70"/>
        <end position="96"/>
    </location>
</feature>
<gene>
    <name evidence="1" type="primary">hfq</name>
    <name type="ordered locus">ECED1_4957</name>
</gene>
<dbReference type="EMBL" id="CU928162">
    <property type="protein sequence ID" value="CAR10915.1"/>
    <property type="molecule type" value="Genomic_DNA"/>
</dbReference>
<dbReference type="RefSeq" id="WP_001051883.1">
    <property type="nucleotide sequence ID" value="NC_011745.1"/>
</dbReference>
<dbReference type="SMR" id="B7MSJ0"/>
<dbReference type="GeneID" id="93777649"/>
<dbReference type="KEGG" id="ecq:ECED1_4957"/>
<dbReference type="HOGENOM" id="CLU_113688_2_1_6"/>
<dbReference type="Proteomes" id="UP000000748">
    <property type="component" value="Chromosome"/>
</dbReference>
<dbReference type="GO" id="GO:0005829">
    <property type="term" value="C:cytosol"/>
    <property type="evidence" value="ECO:0007669"/>
    <property type="project" value="TreeGrafter"/>
</dbReference>
<dbReference type="GO" id="GO:0003723">
    <property type="term" value="F:RNA binding"/>
    <property type="evidence" value="ECO:0007669"/>
    <property type="project" value="UniProtKB-UniRule"/>
</dbReference>
<dbReference type="GO" id="GO:0006355">
    <property type="term" value="P:regulation of DNA-templated transcription"/>
    <property type="evidence" value="ECO:0007669"/>
    <property type="project" value="InterPro"/>
</dbReference>
<dbReference type="GO" id="GO:0043487">
    <property type="term" value="P:regulation of RNA stability"/>
    <property type="evidence" value="ECO:0007669"/>
    <property type="project" value="TreeGrafter"/>
</dbReference>
<dbReference type="GO" id="GO:0045974">
    <property type="term" value="P:regulation of translation, ncRNA-mediated"/>
    <property type="evidence" value="ECO:0007669"/>
    <property type="project" value="TreeGrafter"/>
</dbReference>
<dbReference type="CDD" id="cd01716">
    <property type="entry name" value="Hfq"/>
    <property type="match status" value="1"/>
</dbReference>
<dbReference type="FunFam" id="2.30.30.100:FF:000001">
    <property type="entry name" value="RNA-binding protein Hfq"/>
    <property type="match status" value="1"/>
</dbReference>
<dbReference type="Gene3D" id="2.30.30.100">
    <property type="match status" value="1"/>
</dbReference>
<dbReference type="HAMAP" id="MF_00436">
    <property type="entry name" value="Hfq"/>
    <property type="match status" value="1"/>
</dbReference>
<dbReference type="InterPro" id="IPR005001">
    <property type="entry name" value="Hfq"/>
</dbReference>
<dbReference type="InterPro" id="IPR010920">
    <property type="entry name" value="LSM_dom_sf"/>
</dbReference>
<dbReference type="InterPro" id="IPR047575">
    <property type="entry name" value="Sm"/>
</dbReference>
<dbReference type="NCBIfam" id="TIGR02383">
    <property type="entry name" value="Hfq"/>
    <property type="match status" value="1"/>
</dbReference>
<dbReference type="NCBIfam" id="NF001602">
    <property type="entry name" value="PRK00395.1"/>
    <property type="match status" value="1"/>
</dbReference>
<dbReference type="PANTHER" id="PTHR34772">
    <property type="entry name" value="RNA-BINDING PROTEIN HFQ"/>
    <property type="match status" value="1"/>
</dbReference>
<dbReference type="PANTHER" id="PTHR34772:SF1">
    <property type="entry name" value="RNA-BINDING PROTEIN HFQ"/>
    <property type="match status" value="1"/>
</dbReference>
<dbReference type="Pfam" id="PF17209">
    <property type="entry name" value="Hfq"/>
    <property type="match status" value="1"/>
</dbReference>
<dbReference type="SUPFAM" id="SSF50182">
    <property type="entry name" value="Sm-like ribonucleoproteins"/>
    <property type="match status" value="1"/>
</dbReference>
<dbReference type="PROSITE" id="PS52002">
    <property type="entry name" value="SM"/>
    <property type="match status" value="1"/>
</dbReference>
<name>HFQ_ECO81</name>
<proteinExistence type="inferred from homology"/>